<comment type="function">
    <text>Occurs in almost all aerobically respiring organisms and serves to protect cells from the toxic effects of hydrogen peroxide.</text>
</comment>
<comment type="catalytic activity">
    <reaction evidence="2">
        <text>2 H2O2 = O2 + 2 H2O</text>
        <dbReference type="Rhea" id="RHEA:20309"/>
        <dbReference type="ChEBI" id="CHEBI:15377"/>
        <dbReference type="ChEBI" id="CHEBI:15379"/>
        <dbReference type="ChEBI" id="CHEBI:16240"/>
        <dbReference type="EC" id="1.11.1.6"/>
    </reaction>
</comment>
<comment type="cofactor">
    <cofactor evidence="1">
        <name>heme</name>
        <dbReference type="ChEBI" id="CHEBI:30413"/>
    </cofactor>
</comment>
<comment type="subunit">
    <text evidence="1">Homotetramer.</text>
</comment>
<comment type="subcellular location">
    <subcellularLocation>
        <location evidence="1">Peroxisome</location>
    </subcellularLocation>
    <subcellularLocation>
        <location evidence="1">Glyoxysome</location>
    </subcellularLocation>
</comment>
<comment type="similarity">
    <text evidence="3">Belongs to the catalase family.</text>
</comment>
<proteinExistence type="evidence at transcript level"/>
<keyword id="KW-0330">Glyoxysome</keyword>
<keyword id="KW-0349">Heme</keyword>
<keyword id="KW-0376">Hydrogen peroxide</keyword>
<keyword id="KW-0408">Iron</keyword>
<keyword id="KW-0479">Metal-binding</keyword>
<keyword id="KW-0560">Oxidoreductase</keyword>
<keyword id="KW-0575">Peroxidase</keyword>
<keyword id="KW-0576">Peroxisome</keyword>
<keyword id="KW-1185">Reference proteome</keyword>
<feature type="chain" id="PRO_0000084967" description="Catalase-1">
    <location>
        <begin position="1"/>
        <end position="492"/>
    </location>
</feature>
<feature type="active site" evidence="2">
    <location>
        <position position="65"/>
    </location>
</feature>
<feature type="active site" evidence="2">
    <location>
        <position position="138"/>
    </location>
</feature>
<feature type="binding site" description="axial binding residue" evidence="1">
    <location>
        <position position="348"/>
    </location>
    <ligand>
        <name>heme</name>
        <dbReference type="ChEBI" id="CHEBI:30413"/>
    </ligand>
    <ligandPart>
        <name>Fe</name>
        <dbReference type="ChEBI" id="CHEBI:18248"/>
    </ligandPart>
</feature>
<reference key="1">
    <citation type="submission" date="1996-07" db="EMBL/GenBank/DDBJ databases">
        <authorList>
            <person name="Saruyama H."/>
            <person name="Matsumura T."/>
        </authorList>
    </citation>
    <scope>NUCLEOTIDE SEQUENCE [MRNA]</scope>
</reference>
<accession>Q43206</accession>
<dbReference type="EC" id="1.11.1.6"/>
<dbReference type="EMBL" id="D86327">
    <property type="protein sequence ID" value="BAA13068.1"/>
    <property type="molecule type" value="mRNA"/>
</dbReference>
<dbReference type="PIR" id="T06478">
    <property type="entry name" value="T06478"/>
</dbReference>
<dbReference type="SMR" id="Q43206"/>
<dbReference type="STRING" id="4565.Q43206"/>
<dbReference type="PaxDb" id="4565-Traes_4DL_4FC0D4B27.1"/>
<dbReference type="eggNOG" id="KOG0047">
    <property type="taxonomic scope" value="Eukaryota"/>
</dbReference>
<dbReference type="Proteomes" id="UP000019116">
    <property type="component" value="Unplaced"/>
</dbReference>
<dbReference type="ExpressionAtlas" id="Q43206">
    <property type="expression patterns" value="baseline and differential"/>
</dbReference>
<dbReference type="GO" id="GO:0005737">
    <property type="term" value="C:cytoplasm"/>
    <property type="evidence" value="ECO:0000318"/>
    <property type="project" value="GO_Central"/>
</dbReference>
<dbReference type="GO" id="GO:0009514">
    <property type="term" value="C:glyoxysome"/>
    <property type="evidence" value="ECO:0007669"/>
    <property type="project" value="UniProtKB-SubCell"/>
</dbReference>
<dbReference type="GO" id="GO:0005777">
    <property type="term" value="C:peroxisome"/>
    <property type="evidence" value="ECO:0000318"/>
    <property type="project" value="GO_Central"/>
</dbReference>
<dbReference type="GO" id="GO:0005886">
    <property type="term" value="C:plasma membrane"/>
    <property type="evidence" value="ECO:0000318"/>
    <property type="project" value="GO_Central"/>
</dbReference>
<dbReference type="GO" id="GO:0004096">
    <property type="term" value="F:catalase activity"/>
    <property type="evidence" value="ECO:0000318"/>
    <property type="project" value="GO_Central"/>
</dbReference>
<dbReference type="GO" id="GO:0020037">
    <property type="term" value="F:heme binding"/>
    <property type="evidence" value="ECO:0000318"/>
    <property type="project" value="GO_Central"/>
</dbReference>
<dbReference type="GO" id="GO:0046872">
    <property type="term" value="F:metal ion binding"/>
    <property type="evidence" value="ECO:0007669"/>
    <property type="project" value="UniProtKB-KW"/>
</dbReference>
<dbReference type="GO" id="GO:0042744">
    <property type="term" value="P:hydrogen peroxide catabolic process"/>
    <property type="evidence" value="ECO:0000318"/>
    <property type="project" value="GO_Central"/>
</dbReference>
<dbReference type="GO" id="GO:0009725">
    <property type="term" value="P:response to hormone"/>
    <property type="evidence" value="ECO:0007669"/>
    <property type="project" value="UniProtKB-ARBA"/>
</dbReference>
<dbReference type="GO" id="GO:0042542">
    <property type="term" value="P:response to hydrogen peroxide"/>
    <property type="evidence" value="ECO:0000318"/>
    <property type="project" value="GO_Central"/>
</dbReference>
<dbReference type="CDD" id="cd08154">
    <property type="entry name" value="catalase_clade_1"/>
    <property type="match status" value="1"/>
</dbReference>
<dbReference type="FunFam" id="2.40.180.10:FF:000002">
    <property type="entry name" value="Catalase"/>
    <property type="match status" value="1"/>
</dbReference>
<dbReference type="Gene3D" id="2.40.180.10">
    <property type="entry name" value="Catalase core domain"/>
    <property type="match status" value="1"/>
</dbReference>
<dbReference type="InterPro" id="IPR018028">
    <property type="entry name" value="Catalase"/>
</dbReference>
<dbReference type="InterPro" id="IPR024708">
    <property type="entry name" value="Catalase_AS"/>
</dbReference>
<dbReference type="InterPro" id="IPR024711">
    <property type="entry name" value="Catalase_clade1/3"/>
</dbReference>
<dbReference type="InterPro" id="IPR011614">
    <property type="entry name" value="Catalase_core"/>
</dbReference>
<dbReference type="InterPro" id="IPR002226">
    <property type="entry name" value="Catalase_haem_BS"/>
</dbReference>
<dbReference type="InterPro" id="IPR010582">
    <property type="entry name" value="Catalase_immune_responsive"/>
</dbReference>
<dbReference type="InterPro" id="IPR020835">
    <property type="entry name" value="Catalase_sf"/>
</dbReference>
<dbReference type="PANTHER" id="PTHR11465">
    <property type="entry name" value="CATALASE"/>
    <property type="match status" value="1"/>
</dbReference>
<dbReference type="PANTHER" id="PTHR11465:SF23">
    <property type="entry name" value="CATALASE-2"/>
    <property type="match status" value="1"/>
</dbReference>
<dbReference type="Pfam" id="PF00199">
    <property type="entry name" value="Catalase"/>
    <property type="match status" value="1"/>
</dbReference>
<dbReference type="Pfam" id="PF06628">
    <property type="entry name" value="Catalase-rel"/>
    <property type="match status" value="1"/>
</dbReference>
<dbReference type="PIRSF" id="PIRSF038928">
    <property type="entry name" value="Catalase_clade1-3"/>
    <property type="match status" value="1"/>
</dbReference>
<dbReference type="PRINTS" id="PR00067">
    <property type="entry name" value="CATALASE"/>
</dbReference>
<dbReference type="SMART" id="SM01060">
    <property type="entry name" value="Catalase"/>
    <property type="match status" value="1"/>
</dbReference>
<dbReference type="SUPFAM" id="SSF56634">
    <property type="entry name" value="Heme-dependent catalase-like"/>
    <property type="match status" value="1"/>
</dbReference>
<dbReference type="PROSITE" id="PS00437">
    <property type="entry name" value="CATALASE_1"/>
    <property type="match status" value="1"/>
</dbReference>
<dbReference type="PROSITE" id="PS00438">
    <property type="entry name" value="CATALASE_2"/>
    <property type="match status" value="1"/>
</dbReference>
<dbReference type="PROSITE" id="PS51402">
    <property type="entry name" value="CATALASE_3"/>
    <property type="match status" value="1"/>
</dbReference>
<sequence length="492" mass="56808">MDPYKYRPSSSFNAPMWSTNSGAPVWNNDNSLTVGSRGPILLEDYHLVEKIADFDRERIPERVVHARGATAKGFFEVTHDVSHLTCADFLRAPGVQTPVIVRFSTVIHERGSPETLRDPRGFAIKFYTREGNWDLVGNNFPVFFIRDGMKFPDMVHALKPNPKTHIQENWRILDFFSHHPESLHMFTFLFDDIGVPADYRHMDGSGVNTYTLVNRAGKAHYVKFHWKPTCGVKSLLEEEAVTVGGTNHSHATKDLTDSIAAGNYPEWTFYIQTIDPDYEERFDFDPLDVTKTWPEDVVPLQPVGRLVLNRNIDNFFSENEQLAFCPGIIVPGVYYSDDKLLQTRIFSYSDTQRHRLGPNYLLLPANAPKCSHHNNHYDGLMNFMHRDEEVDYFPSRFDPAKHAPRYPIPSRTLNGRREKMVIEKENNFKQPGERYRSMDPARQERFINRWIDALSDPRLTHEIKAIWLSYWSQADKSLGQKLASRLSSKPSM</sequence>
<organism>
    <name type="scientific">Triticum aestivum</name>
    <name type="common">Wheat</name>
    <dbReference type="NCBI Taxonomy" id="4565"/>
    <lineage>
        <taxon>Eukaryota</taxon>
        <taxon>Viridiplantae</taxon>
        <taxon>Streptophyta</taxon>
        <taxon>Embryophyta</taxon>
        <taxon>Tracheophyta</taxon>
        <taxon>Spermatophyta</taxon>
        <taxon>Magnoliopsida</taxon>
        <taxon>Liliopsida</taxon>
        <taxon>Poales</taxon>
        <taxon>Poaceae</taxon>
        <taxon>BOP clade</taxon>
        <taxon>Pooideae</taxon>
        <taxon>Triticodae</taxon>
        <taxon>Triticeae</taxon>
        <taxon>Triticinae</taxon>
        <taxon>Triticum</taxon>
    </lineage>
</organism>
<gene>
    <name type="primary">CAT1</name>
</gene>
<name>CATA1_WHEAT</name>
<protein>
    <recommendedName>
        <fullName>Catalase-1</fullName>
        <ecNumber>1.11.1.6</ecNumber>
    </recommendedName>
</protein>
<evidence type="ECO:0000250" key="1"/>
<evidence type="ECO:0000255" key="2">
    <source>
        <dbReference type="PROSITE-ProRule" id="PRU10013"/>
    </source>
</evidence>
<evidence type="ECO:0000305" key="3"/>